<feature type="chain" id="PRO_0000049251" description="Paired mesoderm homeobox protein 1">
    <location>
        <begin position="1"/>
        <end position="245"/>
    </location>
</feature>
<feature type="DNA-binding region" description="Homeobox" evidence="4">
    <location>
        <begin position="94"/>
        <end position="153"/>
    </location>
</feature>
<feature type="region of interest" description="Disordered" evidence="6">
    <location>
        <begin position="1"/>
        <end position="22"/>
    </location>
</feature>
<feature type="region of interest" description="Disordered" evidence="6">
    <location>
        <begin position="63"/>
        <end position="103"/>
    </location>
</feature>
<feature type="short sequence motif" description="OAR" evidence="5">
    <location>
        <begin position="222"/>
        <end position="235"/>
    </location>
</feature>
<feature type="compositionally biased region" description="Polar residues" evidence="6">
    <location>
        <begin position="69"/>
        <end position="84"/>
    </location>
</feature>
<feature type="modified residue" description="Phosphoserine" evidence="2">
    <location>
        <position position="21"/>
    </location>
</feature>
<feature type="modified residue" description="N6-acetyllysine" evidence="1">
    <location>
        <position position="160"/>
    </location>
</feature>
<feature type="modified residue" description="Phosphoserine" evidence="3">
    <location>
        <position position="197"/>
    </location>
</feature>
<feature type="splice variant" id="VSP_002278" description="In isoform 2." evidence="11">
    <original>SAMATYSATCANNSPAQGINMANSIANLRLKAKEYSLQRNQVPTVN</original>
    <variation>RSSSLPRCCLHEGLHNGF</variation>
    <location>
        <begin position="200"/>
        <end position="245"/>
    </location>
</feature>
<feature type="sequence variant" id="VAR_066414" description="In AGOTC; dbSNP:rs387906667." evidence="8">
    <original>F</original>
    <variation>S</variation>
    <location>
        <position position="113"/>
    </location>
</feature>
<protein>
    <recommendedName>
        <fullName>Paired mesoderm homeobox protein 1</fullName>
    </recommendedName>
    <alternativeName>
        <fullName evidence="11">Homeobox protein PHOX1</fullName>
    </alternativeName>
    <alternativeName>
        <fullName>Paired-related homeobox protein 1</fullName>
        <shortName>PRX-1</shortName>
    </alternativeName>
</protein>
<evidence type="ECO:0000250" key="1">
    <source>
        <dbReference type="UniProtKB" id="P63013"/>
    </source>
</evidence>
<evidence type="ECO:0000250" key="2">
    <source>
        <dbReference type="UniProtKB" id="P63014"/>
    </source>
</evidence>
<evidence type="ECO:0000255" key="3"/>
<evidence type="ECO:0000255" key="4">
    <source>
        <dbReference type="PROSITE-ProRule" id="PRU00108"/>
    </source>
</evidence>
<evidence type="ECO:0000255" key="5">
    <source>
        <dbReference type="PROSITE-ProRule" id="PRU00138"/>
    </source>
</evidence>
<evidence type="ECO:0000256" key="6">
    <source>
        <dbReference type="SAM" id="MobiDB-lite"/>
    </source>
</evidence>
<evidence type="ECO:0000269" key="7">
    <source>
    </source>
</evidence>
<evidence type="ECO:0000269" key="8">
    <source>
    </source>
</evidence>
<evidence type="ECO:0000269" key="9">
    <source>
    </source>
</evidence>
<evidence type="ECO:0000303" key="10">
    <source>
    </source>
</evidence>
<evidence type="ECO:0000303" key="11">
    <source>
    </source>
</evidence>
<evidence type="ECO:0000303" key="12">
    <source>
    </source>
</evidence>
<evidence type="ECO:0000305" key="13"/>
<dbReference type="EMBL" id="AB451463">
    <property type="protein sequence ID" value="BAG70277.1"/>
    <property type="molecule type" value="mRNA"/>
</dbReference>
<dbReference type="EMBL" id="Z97200">
    <property type="status" value="NOT_ANNOTATED_CDS"/>
    <property type="molecule type" value="Genomic_DNA"/>
</dbReference>
<dbReference type="EMBL" id="BC074993">
    <property type="protein sequence ID" value="AAH74993.1"/>
    <property type="molecule type" value="mRNA"/>
</dbReference>
<dbReference type="EMBL" id="M95929">
    <property type="protein sequence ID" value="AAA60085.1"/>
    <property type="molecule type" value="mRNA"/>
</dbReference>
<dbReference type="CCDS" id="CCDS1290.1">
    <molecule id="P54821-1"/>
</dbReference>
<dbReference type="CCDS" id="CCDS1291.1">
    <molecule id="P54821-2"/>
</dbReference>
<dbReference type="RefSeq" id="NP_008833.1">
    <molecule id="P54821-2"/>
    <property type="nucleotide sequence ID" value="NM_006902.5"/>
</dbReference>
<dbReference type="RefSeq" id="NP_073207.1">
    <molecule id="P54821-1"/>
    <property type="nucleotide sequence ID" value="NM_022716.4"/>
</dbReference>
<dbReference type="SMR" id="P54821"/>
<dbReference type="BioGRID" id="111405">
    <property type="interactions" value="11"/>
</dbReference>
<dbReference type="CORUM" id="P54821"/>
<dbReference type="FunCoup" id="P54821">
    <property type="interactions" value="1436"/>
</dbReference>
<dbReference type="IntAct" id="P54821">
    <property type="interactions" value="4"/>
</dbReference>
<dbReference type="STRING" id="9606.ENSP00000239461"/>
<dbReference type="ChEMBL" id="CHEMBL4879442"/>
<dbReference type="GlyGen" id="P54821">
    <property type="glycosylation" value="1 site, 1 O-linked glycan (1 site)"/>
</dbReference>
<dbReference type="iPTMnet" id="P54821"/>
<dbReference type="PhosphoSitePlus" id="P54821"/>
<dbReference type="BioMuta" id="PRRX1"/>
<dbReference type="DMDM" id="6174916"/>
<dbReference type="jPOST" id="P54821"/>
<dbReference type="MassIVE" id="P54821"/>
<dbReference type="PaxDb" id="9606-ENSP00000239461"/>
<dbReference type="PeptideAtlas" id="P54821"/>
<dbReference type="ProteomicsDB" id="56732">
    <molecule id="P54821-1"/>
</dbReference>
<dbReference type="ProteomicsDB" id="56733">
    <molecule id="P54821-2"/>
</dbReference>
<dbReference type="Antibodypedia" id="34372">
    <property type="antibodies" value="441 antibodies from 30 providers"/>
</dbReference>
<dbReference type="DNASU" id="5396"/>
<dbReference type="Ensembl" id="ENST00000239461.11">
    <molecule id="P54821-1"/>
    <property type="protein sequence ID" value="ENSP00000239461.6"/>
    <property type="gene ID" value="ENSG00000116132.12"/>
</dbReference>
<dbReference type="Ensembl" id="ENST00000367760.7">
    <molecule id="P54821-2"/>
    <property type="protein sequence ID" value="ENSP00000356734.3"/>
    <property type="gene ID" value="ENSG00000116132.12"/>
</dbReference>
<dbReference type="GeneID" id="5396"/>
<dbReference type="KEGG" id="hsa:5396"/>
<dbReference type="MANE-Select" id="ENST00000239461.11">
    <property type="protein sequence ID" value="ENSP00000239461.6"/>
    <property type="RefSeq nucleotide sequence ID" value="NM_022716.4"/>
    <property type="RefSeq protein sequence ID" value="NP_073207.1"/>
</dbReference>
<dbReference type="UCSC" id="uc001ghe.4">
    <molecule id="P54821-1"/>
    <property type="organism name" value="human"/>
</dbReference>
<dbReference type="AGR" id="HGNC:9142"/>
<dbReference type="CTD" id="5396"/>
<dbReference type="DisGeNET" id="5396"/>
<dbReference type="GeneCards" id="PRRX1"/>
<dbReference type="HGNC" id="HGNC:9142">
    <property type="gene designation" value="PRRX1"/>
</dbReference>
<dbReference type="HPA" id="ENSG00000116132">
    <property type="expression patterns" value="Low tissue specificity"/>
</dbReference>
<dbReference type="MalaCards" id="PRRX1"/>
<dbReference type="MIM" id="167420">
    <property type="type" value="gene"/>
</dbReference>
<dbReference type="MIM" id="202650">
    <property type="type" value="phenotype"/>
</dbReference>
<dbReference type="neXtProt" id="NX_P54821"/>
<dbReference type="OpenTargets" id="ENSG00000116132"/>
<dbReference type="Orphanet" id="990">
    <property type="disease" value="Agnathia-holoprosencephaly-situs inversus syndrome"/>
</dbReference>
<dbReference type="PharmGKB" id="PA33466"/>
<dbReference type="VEuPathDB" id="HostDB:ENSG00000116132"/>
<dbReference type="eggNOG" id="KOG0490">
    <property type="taxonomic scope" value="Eukaryota"/>
</dbReference>
<dbReference type="GeneTree" id="ENSGT00940000159466"/>
<dbReference type="InParanoid" id="P54821"/>
<dbReference type="OMA" id="SCALANH"/>
<dbReference type="OrthoDB" id="6159439at2759"/>
<dbReference type="PAN-GO" id="P54821">
    <property type="GO annotations" value="4 GO annotations based on evolutionary models"/>
</dbReference>
<dbReference type="PhylomeDB" id="P54821"/>
<dbReference type="TreeFam" id="TF351612"/>
<dbReference type="PathwayCommons" id="P54821"/>
<dbReference type="SignaLink" id="P54821"/>
<dbReference type="SIGNOR" id="P54821"/>
<dbReference type="BioGRID-ORCS" id="5396">
    <property type="hits" value="12 hits in 1170 CRISPR screens"/>
</dbReference>
<dbReference type="ChiTaRS" id="PRRX1">
    <property type="organism name" value="human"/>
</dbReference>
<dbReference type="GeneWiki" id="PRRX1"/>
<dbReference type="GenomeRNAi" id="5396"/>
<dbReference type="Pharos" id="P54821">
    <property type="development level" value="Tbio"/>
</dbReference>
<dbReference type="PRO" id="PR:P54821"/>
<dbReference type="Proteomes" id="UP000005640">
    <property type="component" value="Chromosome 1"/>
</dbReference>
<dbReference type="RNAct" id="P54821">
    <property type="molecule type" value="protein"/>
</dbReference>
<dbReference type="Bgee" id="ENSG00000116132">
    <property type="expression patterns" value="Expressed in calcaneal tendon and 189 other cell types or tissues"/>
</dbReference>
<dbReference type="ExpressionAtlas" id="P54821">
    <property type="expression patterns" value="baseline and differential"/>
</dbReference>
<dbReference type="GO" id="GO:0000785">
    <property type="term" value="C:chromatin"/>
    <property type="evidence" value="ECO:0000247"/>
    <property type="project" value="NTNU_SB"/>
</dbReference>
<dbReference type="GO" id="GO:0005829">
    <property type="term" value="C:cytosol"/>
    <property type="evidence" value="ECO:0000314"/>
    <property type="project" value="HPA"/>
</dbReference>
<dbReference type="GO" id="GO:0005654">
    <property type="term" value="C:nucleoplasm"/>
    <property type="evidence" value="ECO:0000314"/>
    <property type="project" value="HPA"/>
</dbReference>
<dbReference type="GO" id="GO:0005634">
    <property type="term" value="C:nucleus"/>
    <property type="evidence" value="ECO:0000318"/>
    <property type="project" value="GO_Central"/>
</dbReference>
<dbReference type="GO" id="GO:0001228">
    <property type="term" value="F:DNA-binding transcription activator activity, RNA polymerase II-specific"/>
    <property type="evidence" value="ECO:0000314"/>
    <property type="project" value="ARUK-UCL"/>
</dbReference>
<dbReference type="GO" id="GO:0000981">
    <property type="term" value="F:DNA-binding transcription factor activity, RNA polymerase II-specific"/>
    <property type="evidence" value="ECO:0000247"/>
    <property type="project" value="NTNU_SB"/>
</dbReference>
<dbReference type="GO" id="GO:0001227">
    <property type="term" value="F:DNA-binding transcription repressor activity, RNA polymerase II-specific"/>
    <property type="evidence" value="ECO:0007669"/>
    <property type="project" value="Ensembl"/>
</dbReference>
<dbReference type="GO" id="GO:0071837">
    <property type="term" value="F:HMG box domain binding"/>
    <property type="evidence" value="ECO:0007669"/>
    <property type="project" value="Ensembl"/>
</dbReference>
<dbReference type="GO" id="GO:0000978">
    <property type="term" value="F:RNA polymerase II cis-regulatory region sequence-specific DNA binding"/>
    <property type="evidence" value="ECO:0000314"/>
    <property type="project" value="GO_Central"/>
</dbReference>
<dbReference type="GO" id="GO:0016251">
    <property type="term" value="F:RNA polymerase II general transcription initiation factor activity"/>
    <property type="evidence" value="ECO:0007669"/>
    <property type="project" value="Ensembl"/>
</dbReference>
<dbReference type="GO" id="GO:0061629">
    <property type="term" value="F:RNA polymerase II-specific DNA-binding transcription factor binding"/>
    <property type="evidence" value="ECO:0000353"/>
    <property type="project" value="ARUK-UCL"/>
</dbReference>
<dbReference type="GO" id="GO:0048844">
    <property type="term" value="P:artery morphogenesis"/>
    <property type="evidence" value="ECO:0007669"/>
    <property type="project" value="Ensembl"/>
</dbReference>
<dbReference type="GO" id="GO:0051216">
    <property type="term" value="P:cartilage development"/>
    <property type="evidence" value="ECO:0007669"/>
    <property type="project" value="Ensembl"/>
</dbReference>
<dbReference type="GO" id="GO:0048701">
    <property type="term" value="P:embryonic cranial skeleton morphogenesis"/>
    <property type="evidence" value="ECO:0007669"/>
    <property type="project" value="Ensembl"/>
</dbReference>
<dbReference type="GO" id="GO:0030326">
    <property type="term" value="P:embryonic limb morphogenesis"/>
    <property type="evidence" value="ECO:0007669"/>
    <property type="project" value="Ensembl"/>
</dbReference>
<dbReference type="GO" id="GO:0042472">
    <property type="term" value="P:inner ear morphogenesis"/>
    <property type="evidence" value="ECO:0007669"/>
    <property type="project" value="Ensembl"/>
</dbReference>
<dbReference type="GO" id="GO:0010463">
    <property type="term" value="P:mesenchymal cell proliferation"/>
    <property type="evidence" value="ECO:0007669"/>
    <property type="project" value="Ensembl"/>
</dbReference>
<dbReference type="GO" id="GO:0042474">
    <property type="term" value="P:middle ear morphogenesis"/>
    <property type="evidence" value="ECO:0007669"/>
    <property type="project" value="Ensembl"/>
</dbReference>
<dbReference type="GO" id="GO:0048664">
    <property type="term" value="P:neuron fate determination"/>
    <property type="evidence" value="ECO:0007669"/>
    <property type="project" value="Ensembl"/>
</dbReference>
<dbReference type="GO" id="GO:0097150">
    <property type="term" value="P:neuronal stem cell population maintenance"/>
    <property type="evidence" value="ECO:0007669"/>
    <property type="project" value="Ensembl"/>
</dbReference>
<dbReference type="GO" id="GO:0002053">
    <property type="term" value="P:positive regulation of mesenchymal cell proliferation"/>
    <property type="evidence" value="ECO:0007669"/>
    <property type="project" value="Ensembl"/>
</dbReference>
<dbReference type="GO" id="GO:0045880">
    <property type="term" value="P:positive regulation of smoothened signaling pathway"/>
    <property type="evidence" value="ECO:0007669"/>
    <property type="project" value="Ensembl"/>
</dbReference>
<dbReference type="GO" id="GO:2000648">
    <property type="term" value="P:positive regulation of stem cell proliferation"/>
    <property type="evidence" value="ECO:0007669"/>
    <property type="project" value="Ensembl"/>
</dbReference>
<dbReference type="GO" id="GO:0045944">
    <property type="term" value="P:positive regulation of transcription by RNA polymerase II"/>
    <property type="evidence" value="ECO:0000314"/>
    <property type="project" value="ARUK-UCL"/>
</dbReference>
<dbReference type="GO" id="GO:0070570">
    <property type="term" value="P:regulation of neuron projection regeneration"/>
    <property type="evidence" value="ECO:0007669"/>
    <property type="project" value="Ensembl"/>
</dbReference>
<dbReference type="GO" id="GO:0006357">
    <property type="term" value="P:regulation of transcription by RNA polymerase II"/>
    <property type="evidence" value="ECO:0000318"/>
    <property type="project" value="GO_Central"/>
</dbReference>
<dbReference type="GO" id="GO:0060021">
    <property type="term" value="P:roof of mouth development"/>
    <property type="evidence" value="ECO:0007669"/>
    <property type="project" value="Ensembl"/>
</dbReference>
<dbReference type="GO" id="GO:0007224">
    <property type="term" value="P:smoothened signaling pathway"/>
    <property type="evidence" value="ECO:0007669"/>
    <property type="project" value="Ensembl"/>
</dbReference>
<dbReference type="GO" id="GO:0072089">
    <property type="term" value="P:stem cell proliferation"/>
    <property type="evidence" value="ECO:0007669"/>
    <property type="project" value="Ensembl"/>
</dbReference>
<dbReference type="CDD" id="cd00086">
    <property type="entry name" value="homeodomain"/>
    <property type="match status" value="1"/>
</dbReference>
<dbReference type="FunFam" id="1.10.10.60:FF:000066">
    <property type="entry name" value="Paired mesoderm homeobox protein 1"/>
    <property type="match status" value="1"/>
</dbReference>
<dbReference type="Gene3D" id="1.10.10.60">
    <property type="entry name" value="Homeodomain-like"/>
    <property type="match status" value="1"/>
</dbReference>
<dbReference type="InterPro" id="IPR001356">
    <property type="entry name" value="HD"/>
</dbReference>
<dbReference type="InterPro" id="IPR017970">
    <property type="entry name" value="Homeobox_CS"/>
</dbReference>
<dbReference type="InterPro" id="IPR009057">
    <property type="entry name" value="Homeodomain-like_sf"/>
</dbReference>
<dbReference type="InterPro" id="IPR003654">
    <property type="entry name" value="OAR_dom"/>
</dbReference>
<dbReference type="InterPro" id="IPR043378">
    <property type="entry name" value="PRRX1/2"/>
</dbReference>
<dbReference type="PANTHER" id="PTHR46385:SF1">
    <property type="entry name" value="PAIRED MESODERM HOMEOBOX PROTEIN 1"/>
    <property type="match status" value="1"/>
</dbReference>
<dbReference type="PANTHER" id="PTHR46385">
    <property type="entry name" value="PAIRED MESODERM HOMEOBOX PROTEIN 1-RELATED"/>
    <property type="match status" value="1"/>
</dbReference>
<dbReference type="Pfam" id="PF00046">
    <property type="entry name" value="Homeodomain"/>
    <property type="match status" value="1"/>
</dbReference>
<dbReference type="Pfam" id="PF03826">
    <property type="entry name" value="OAR"/>
    <property type="match status" value="1"/>
</dbReference>
<dbReference type="SMART" id="SM00389">
    <property type="entry name" value="HOX"/>
    <property type="match status" value="1"/>
</dbReference>
<dbReference type="SUPFAM" id="SSF46689">
    <property type="entry name" value="Homeodomain-like"/>
    <property type="match status" value="1"/>
</dbReference>
<dbReference type="PROSITE" id="PS00027">
    <property type="entry name" value="HOMEOBOX_1"/>
    <property type="match status" value="1"/>
</dbReference>
<dbReference type="PROSITE" id="PS50071">
    <property type="entry name" value="HOMEOBOX_2"/>
    <property type="match status" value="1"/>
</dbReference>
<dbReference type="PROSITE" id="PS50803">
    <property type="entry name" value="OAR"/>
    <property type="match status" value="1"/>
</dbReference>
<comment type="function">
    <text evidence="1 9">Master transcription factor of stromal fibroblasts for myofibroblastic lineage progression. Orchestrates the functional drift of fibroblasts into myofibroblastic phenotype via TGF-beta signaling by remodeling a super-enhancer landscape. Through this function, plays an essential role in wound healing process (PubMed:35589735). Acts as a transcriptional regulator of muscle creatine kinase (MCK) and so has a role in the establishment of diverse mesodermal muscle types. The protein binds to an A/T-rich element in the muscle creatine enhancer (By similarity). May play a role in homeostasis and regeneration of bone, white adipose tissue and derm (By similarity).</text>
</comment>
<comment type="function">
    <molecule>Isoform 1</molecule>
    <text evidence="1">Transcriptional activator, when transfected in fibroblastic or myoblastic cell lines. This activity may be masked by the C-terminal OAR domain.</text>
</comment>
<comment type="function">
    <molecule>Isoform 2</molecule>
    <text evidence="1">Transcriptional repressor, when transfected in fibroblastic or myoblastic cell lines.</text>
</comment>
<comment type="subunit">
    <text evidence="1">Interacts with SMAD3.</text>
</comment>
<comment type="interaction">
    <interactant intactId="EBI-12828023">
        <id>P54821</id>
    </interactant>
    <interactant intactId="EBI-739784">
        <id>Q9BW66</id>
        <label>CINP</label>
    </interactant>
    <organismsDiffer>false</organismsDiffer>
    <experiments>3</experiments>
</comment>
<comment type="interaction">
    <interactant intactId="EBI-12828023">
        <id>P54821</id>
    </interactant>
    <interactant intactId="EBI-3921347">
        <id>P51687</id>
        <label>SUOX</label>
    </interactant>
    <organismsDiffer>false</organismsDiffer>
    <experiments>3</experiments>
</comment>
<comment type="subcellular location">
    <subcellularLocation>
        <location evidence="1">Nucleus</location>
    </subcellularLocation>
</comment>
<comment type="alternative products">
    <event type="alternative splicing"/>
    <isoform>
        <id>P54821-1</id>
        <name>1</name>
        <name evidence="10">PRRX1a</name>
        <name evidence="12">PMX1-B</name>
        <sequence type="displayed"/>
    </isoform>
    <isoform>
        <id>P54821-2</id>
        <name>2</name>
        <name evidence="10">PRRX1b</name>
        <sequence type="described" ref="VSP_002278"/>
    </isoform>
</comment>
<comment type="tissue specificity">
    <molecule>Isoform 1</molecule>
    <text evidence="7">Widely expressed in embryonic and adult tissues, with highest levels in skeletal muscle. Isoform 1 is either expressed at similar or higher levels compared to isoform 2 in all embryonic tissues but skeletal muscle and heart. In adult tissues, expressed at lower levels compared to isoform 2.</text>
</comment>
<comment type="tissue specificity">
    <molecule>Isoform 2</molecule>
    <text evidence="7">Widely expressed in embryonic and adult tissues, with highest levels in skeletal muscle. Isoform 2 is either expressed at similar or lower levels compared to isoform 1 in all embryonic tissues but skeletal muscle and heart, where it is expressed at higher levels. In adult tissues, expressed at higher levels compared to isoform 1.</text>
</comment>
<comment type="disease" evidence="8">
    <disease id="DI-03217">
        <name>Agnathia-otocephaly complex</name>
        <acronym>AGOTC</acronym>
        <description>A rare condition characterized by mandibular hypoplasia or agnathia, ventromedial auricular malposition (melotia) and/or auricular fusion (synotia), and microstomia with oroglossal hypoplasia or aglossia. Holoprosencephaly is the most commonly identified association, but skeletal, genitourinary, and cardiovascular anomalies, and situs inversus have been reported. The disorder is almost always lethal.</description>
        <dbReference type="MIM" id="202650"/>
    </disease>
    <text>The disease is caused by variants affecting the gene represented in this entry.</text>
</comment>
<comment type="disease">
    <text evidence="9">Strongly expressed in cancer-associated fibroblasts (CAFs) in various cancer types. Its expression correlates with unfavorable clinical outcome. May be essential for the tumorigenicity and metastasis-inducing capacity of CAFs. Can reprogram tumor-suppressive normal fibroblasts into CAFs.</text>
</comment>
<comment type="similarity">
    <text evidence="13">Belongs to the paired homeobox family.</text>
</comment>
<name>PRRX1_HUMAN</name>
<gene>
    <name type="primary">PRRX1</name>
    <name type="synonym">PMX1</name>
</gene>
<sequence length="245" mass="27296">MTSSYGHVLERQPALGGRLDSPGNLDTLQAKKNFSVSHLLDLEEAGDMVAAQADENVGEAGRSLLESPGLTSGSDTPQQDNDQLNSEEKKKRKQRRNRTTFNSSQLQALERVFERTHYPDAFVREDLARRVNLTEARVQVWFQNRRAKFRRNERAMLANKNASLLKSYSGDVTAVEQPIVPRPAPRPTDYLSWGTASPYSAMATYSATCANNSPAQGINMANSIANLRLKAKEYSLQRNQVPTVN</sequence>
<keyword id="KW-0007">Acetylation</keyword>
<keyword id="KW-0025">Alternative splicing</keyword>
<keyword id="KW-0217">Developmental protein</keyword>
<keyword id="KW-0225">Disease variant</keyword>
<keyword id="KW-0238">DNA-binding</keyword>
<keyword id="KW-0371">Homeobox</keyword>
<keyword id="KW-0539">Nucleus</keyword>
<keyword id="KW-0597">Phosphoprotein</keyword>
<keyword id="KW-1267">Proteomics identification</keyword>
<keyword id="KW-1185">Reference proteome</keyword>
<accession>P54821</accession>
<accession>B5BUM7</accession>
<accession>O60807</accession>
<organism>
    <name type="scientific">Homo sapiens</name>
    <name type="common">Human</name>
    <dbReference type="NCBI Taxonomy" id="9606"/>
    <lineage>
        <taxon>Eukaryota</taxon>
        <taxon>Metazoa</taxon>
        <taxon>Chordata</taxon>
        <taxon>Craniata</taxon>
        <taxon>Vertebrata</taxon>
        <taxon>Euteleostomi</taxon>
        <taxon>Mammalia</taxon>
        <taxon>Eutheria</taxon>
        <taxon>Euarchontoglires</taxon>
        <taxon>Primates</taxon>
        <taxon>Haplorrhini</taxon>
        <taxon>Catarrhini</taxon>
        <taxon>Hominidae</taxon>
        <taxon>Homo</taxon>
    </lineage>
</organism>
<reference key="1">
    <citation type="journal article" date="2008" name="Nat. Methods">
        <title>Human protein factory for converting the transcriptome into an in vitro-expressed proteome.</title>
        <authorList>
            <person name="Goshima N."/>
            <person name="Kawamura Y."/>
            <person name="Fukumoto A."/>
            <person name="Miura A."/>
            <person name="Honma R."/>
            <person name="Satoh R."/>
            <person name="Wakamatsu A."/>
            <person name="Yamamoto J."/>
            <person name="Kimura K."/>
            <person name="Nishikawa T."/>
            <person name="Andoh T."/>
            <person name="Iida Y."/>
            <person name="Ishikawa K."/>
            <person name="Ito E."/>
            <person name="Kagawa N."/>
            <person name="Kaminaga C."/>
            <person name="Kanehori K."/>
            <person name="Kawakami B."/>
            <person name="Kenmochi K."/>
            <person name="Kimura R."/>
            <person name="Kobayashi M."/>
            <person name="Kuroita T."/>
            <person name="Kuwayama H."/>
            <person name="Maruyama Y."/>
            <person name="Matsuo K."/>
            <person name="Minami K."/>
            <person name="Mitsubori M."/>
            <person name="Mori M."/>
            <person name="Morishita R."/>
            <person name="Murase A."/>
            <person name="Nishikawa A."/>
            <person name="Nishikawa S."/>
            <person name="Okamoto T."/>
            <person name="Sakagami N."/>
            <person name="Sakamoto Y."/>
            <person name="Sasaki Y."/>
            <person name="Seki T."/>
            <person name="Sono S."/>
            <person name="Sugiyama A."/>
            <person name="Sumiya T."/>
            <person name="Takayama T."/>
            <person name="Takayama Y."/>
            <person name="Takeda H."/>
            <person name="Togashi T."/>
            <person name="Yahata K."/>
            <person name="Yamada H."/>
            <person name="Yanagisawa Y."/>
            <person name="Endo Y."/>
            <person name="Imamoto F."/>
            <person name="Kisu Y."/>
            <person name="Tanaka S."/>
            <person name="Isogai T."/>
            <person name="Imai J."/>
            <person name="Watanabe S."/>
            <person name="Nomura N."/>
        </authorList>
    </citation>
    <scope>NUCLEOTIDE SEQUENCE [LARGE SCALE MRNA] (ISOFORM 1)</scope>
</reference>
<reference key="2">
    <citation type="journal article" date="2006" name="Nature">
        <title>The DNA sequence and biological annotation of human chromosome 1.</title>
        <authorList>
            <person name="Gregory S.G."/>
            <person name="Barlow K.F."/>
            <person name="McLay K.E."/>
            <person name="Kaul R."/>
            <person name="Swarbreck D."/>
            <person name="Dunham A."/>
            <person name="Scott C.E."/>
            <person name="Howe K.L."/>
            <person name="Woodfine K."/>
            <person name="Spencer C.C.A."/>
            <person name="Jones M.C."/>
            <person name="Gillson C."/>
            <person name="Searle S."/>
            <person name="Zhou Y."/>
            <person name="Kokocinski F."/>
            <person name="McDonald L."/>
            <person name="Evans R."/>
            <person name="Phillips K."/>
            <person name="Atkinson A."/>
            <person name="Cooper R."/>
            <person name="Jones C."/>
            <person name="Hall R.E."/>
            <person name="Andrews T.D."/>
            <person name="Lloyd C."/>
            <person name="Ainscough R."/>
            <person name="Almeida J.P."/>
            <person name="Ambrose K.D."/>
            <person name="Anderson F."/>
            <person name="Andrew R.W."/>
            <person name="Ashwell R.I.S."/>
            <person name="Aubin K."/>
            <person name="Babbage A.K."/>
            <person name="Bagguley C.L."/>
            <person name="Bailey J."/>
            <person name="Beasley H."/>
            <person name="Bethel G."/>
            <person name="Bird C.P."/>
            <person name="Bray-Allen S."/>
            <person name="Brown J.Y."/>
            <person name="Brown A.J."/>
            <person name="Buckley D."/>
            <person name="Burton J."/>
            <person name="Bye J."/>
            <person name="Carder C."/>
            <person name="Chapman J.C."/>
            <person name="Clark S.Y."/>
            <person name="Clarke G."/>
            <person name="Clee C."/>
            <person name="Cobley V."/>
            <person name="Collier R.E."/>
            <person name="Corby N."/>
            <person name="Coville G.J."/>
            <person name="Davies J."/>
            <person name="Deadman R."/>
            <person name="Dunn M."/>
            <person name="Earthrowl M."/>
            <person name="Ellington A.G."/>
            <person name="Errington H."/>
            <person name="Frankish A."/>
            <person name="Frankland J."/>
            <person name="French L."/>
            <person name="Garner P."/>
            <person name="Garnett J."/>
            <person name="Gay L."/>
            <person name="Ghori M.R.J."/>
            <person name="Gibson R."/>
            <person name="Gilby L.M."/>
            <person name="Gillett W."/>
            <person name="Glithero R.J."/>
            <person name="Grafham D.V."/>
            <person name="Griffiths C."/>
            <person name="Griffiths-Jones S."/>
            <person name="Grocock R."/>
            <person name="Hammond S."/>
            <person name="Harrison E.S.I."/>
            <person name="Hart E."/>
            <person name="Haugen E."/>
            <person name="Heath P.D."/>
            <person name="Holmes S."/>
            <person name="Holt K."/>
            <person name="Howden P.J."/>
            <person name="Hunt A.R."/>
            <person name="Hunt S.E."/>
            <person name="Hunter G."/>
            <person name="Isherwood J."/>
            <person name="James R."/>
            <person name="Johnson C."/>
            <person name="Johnson D."/>
            <person name="Joy A."/>
            <person name="Kay M."/>
            <person name="Kershaw J.K."/>
            <person name="Kibukawa M."/>
            <person name="Kimberley A.M."/>
            <person name="King A."/>
            <person name="Knights A.J."/>
            <person name="Lad H."/>
            <person name="Laird G."/>
            <person name="Lawlor S."/>
            <person name="Leongamornlert D.A."/>
            <person name="Lloyd D.M."/>
            <person name="Loveland J."/>
            <person name="Lovell J."/>
            <person name="Lush M.J."/>
            <person name="Lyne R."/>
            <person name="Martin S."/>
            <person name="Mashreghi-Mohammadi M."/>
            <person name="Matthews L."/>
            <person name="Matthews N.S.W."/>
            <person name="McLaren S."/>
            <person name="Milne S."/>
            <person name="Mistry S."/>
            <person name="Moore M.J.F."/>
            <person name="Nickerson T."/>
            <person name="O'Dell C.N."/>
            <person name="Oliver K."/>
            <person name="Palmeiri A."/>
            <person name="Palmer S.A."/>
            <person name="Parker A."/>
            <person name="Patel D."/>
            <person name="Pearce A.V."/>
            <person name="Peck A.I."/>
            <person name="Pelan S."/>
            <person name="Phelps K."/>
            <person name="Phillimore B.J."/>
            <person name="Plumb R."/>
            <person name="Rajan J."/>
            <person name="Raymond C."/>
            <person name="Rouse G."/>
            <person name="Saenphimmachak C."/>
            <person name="Sehra H.K."/>
            <person name="Sheridan E."/>
            <person name="Shownkeen R."/>
            <person name="Sims S."/>
            <person name="Skuce C.D."/>
            <person name="Smith M."/>
            <person name="Steward C."/>
            <person name="Subramanian S."/>
            <person name="Sycamore N."/>
            <person name="Tracey A."/>
            <person name="Tromans A."/>
            <person name="Van Helmond Z."/>
            <person name="Wall M."/>
            <person name="Wallis J.M."/>
            <person name="White S."/>
            <person name="Whitehead S.L."/>
            <person name="Wilkinson J.E."/>
            <person name="Willey D.L."/>
            <person name="Williams H."/>
            <person name="Wilming L."/>
            <person name="Wray P.W."/>
            <person name="Wu Z."/>
            <person name="Coulson A."/>
            <person name="Vaudin M."/>
            <person name="Sulston J.E."/>
            <person name="Durbin R.M."/>
            <person name="Hubbard T."/>
            <person name="Wooster R."/>
            <person name="Dunham I."/>
            <person name="Carter N.P."/>
            <person name="McVean G."/>
            <person name="Ross M.T."/>
            <person name="Harrow J."/>
            <person name="Olson M.V."/>
            <person name="Beck S."/>
            <person name="Rogers J."/>
            <person name="Bentley D.R."/>
        </authorList>
    </citation>
    <scope>NUCLEOTIDE SEQUENCE [LARGE SCALE GENOMIC DNA]</scope>
</reference>
<reference key="3">
    <citation type="journal article" date="2004" name="Genome Res.">
        <title>The status, quality, and expansion of the NIH full-length cDNA project: the Mammalian Gene Collection (MGC).</title>
        <authorList>
            <consortium name="The MGC Project Team"/>
        </authorList>
    </citation>
    <scope>NUCLEOTIDE SEQUENCE [LARGE SCALE MRNA] (ISOFORM 1)</scope>
</reference>
<reference key="4">
    <citation type="journal article" date="1992" name="Science">
        <title>Human and Drosophila homeodomain proteins that enhance the DNA-binding activity of serum response factor.</title>
        <authorList>
            <person name="Grueneberg D.A."/>
            <person name="Natesan S."/>
            <person name="Alexandre C."/>
            <person name="Gilman M.Z."/>
        </authorList>
    </citation>
    <scope>NUCLEOTIDE SEQUENCE [MRNA] OF 19-245 (ISOFORM 2)</scope>
</reference>
<reference key="5">
    <citation type="journal article" date="2000" name="Mamm. Genome">
        <title>Human PRRX1 and PRRX2 genes: cloning, expression, genomic localization, and exclusion as disease genes for Nager syndrome.</title>
        <authorList>
            <person name="Norris R.A."/>
            <person name="Scott K.K."/>
            <person name="Moore C.S."/>
            <person name="Stetten G."/>
            <person name="Brown C.R."/>
            <person name="Jabs E.W."/>
            <person name="Wulfsberg E.A."/>
            <person name="Yu J."/>
            <person name="Kern M.J."/>
        </authorList>
    </citation>
    <scope>TISSUE SPECIFICITY</scope>
</reference>
<reference key="6">
    <citation type="journal article" date="2011" name="Clin. Genet.">
        <title>PRRX1 is mutated in a fetus with agnathia-otocephaly.</title>
        <authorList>
            <person name="Sergi C."/>
            <person name="Kamnasaran D."/>
        </authorList>
    </citation>
    <scope>VARIANT AGOTC SER-113</scope>
</reference>
<reference key="7">
    <citation type="journal article" date="2022" name="Nat. Commun.">
        <title>PRRX1 is a master transcription factor of stromal fibroblasts for myofibroblastic lineage progression.</title>
        <authorList>
            <person name="Lee K.W."/>
            <person name="Yeo S.Y."/>
            <person name="Gong J.R."/>
            <person name="Koo O.J."/>
            <person name="Sohn I."/>
            <person name="Lee W.Y."/>
            <person name="Kim H.C."/>
            <person name="Yun S.H."/>
            <person name="Cho Y.B."/>
            <person name="Choi M.A."/>
            <person name="An S."/>
            <person name="Kim J."/>
            <person name="Sung C.O."/>
            <person name="Cho K.H."/>
            <person name="Kim S.H."/>
        </authorList>
    </citation>
    <scope>FUNCTION</scope>
    <scope>DISEASE</scope>
</reference>
<proteinExistence type="evidence at protein level"/>